<protein>
    <recommendedName>
        <fullName evidence="1">ATP synthase subunit delta</fullName>
    </recommendedName>
    <alternativeName>
        <fullName evidence="1">ATP synthase F(1) sector subunit delta</fullName>
    </alternativeName>
    <alternativeName>
        <fullName evidence="1">F-type ATPase subunit delta</fullName>
        <shortName evidence="1">F-ATPase subunit delta</shortName>
    </alternativeName>
</protein>
<accession>A4TSJ0</accession>
<evidence type="ECO:0000255" key="1">
    <source>
        <dbReference type="HAMAP-Rule" id="MF_01416"/>
    </source>
</evidence>
<keyword id="KW-0066">ATP synthesis</keyword>
<keyword id="KW-0997">Cell inner membrane</keyword>
<keyword id="KW-1003">Cell membrane</keyword>
<keyword id="KW-0139">CF(1)</keyword>
<keyword id="KW-0375">Hydrogen ion transport</keyword>
<keyword id="KW-0406">Ion transport</keyword>
<keyword id="KW-0472">Membrane</keyword>
<keyword id="KW-0813">Transport</keyword>
<proteinExistence type="inferred from homology"/>
<reference key="1">
    <citation type="submission" date="2007-02" db="EMBL/GenBank/DDBJ databases">
        <title>Complete sequence of chromosome of Yersinia pestis Pestoides F.</title>
        <authorList>
            <consortium name="US DOE Joint Genome Institute"/>
            <person name="Copeland A."/>
            <person name="Lucas S."/>
            <person name="Lapidus A."/>
            <person name="Barry K."/>
            <person name="Detter J.C."/>
            <person name="Glavina del Rio T."/>
            <person name="Hammon N."/>
            <person name="Israni S."/>
            <person name="Dalin E."/>
            <person name="Tice H."/>
            <person name="Pitluck S."/>
            <person name="Di Bartolo G."/>
            <person name="Chain P."/>
            <person name="Malfatti S."/>
            <person name="Shin M."/>
            <person name="Vergez L."/>
            <person name="Schmutz J."/>
            <person name="Larimer F."/>
            <person name="Land M."/>
            <person name="Hauser L."/>
            <person name="Worsham P."/>
            <person name="Chu M."/>
            <person name="Bearden S."/>
            <person name="Garcia E."/>
            <person name="Richardson P."/>
        </authorList>
    </citation>
    <scope>NUCLEOTIDE SEQUENCE [LARGE SCALE GENOMIC DNA]</scope>
    <source>
        <strain>Pestoides F</strain>
    </source>
</reference>
<gene>
    <name evidence="1" type="primary">atpH</name>
    <name type="ordered locus">YPDSF_3911</name>
</gene>
<organism>
    <name type="scientific">Yersinia pestis (strain Pestoides F)</name>
    <dbReference type="NCBI Taxonomy" id="386656"/>
    <lineage>
        <taxon>Bacteria</taxon>
        <taxon>Pseudomonadati</taxon>
        <taxon>Pseudomonadota</taxon>
        <taxon>Gammaproteobacteria</taxon>
        <taxon>Enterobacterales</taxon>
        <taxon>Yersiniaceae</taxon>
        <taxon>Yersinia</taxon>
    </lineage>
</organism>
<feature type="chain" id="PRO_0000371201" description="ATP synthase subunit delta">
    <location>
        <begin position="1"/>
        <end position="177"/>
    </location>
</feature>
<dbReference type="EMBL" id="CP000668">
    <property type="protein sequence ID" value="ABP42252.1"/>
    <property type="molecule type" value="Genomic_DNA"/>
</dbReference>
<dbReference type="RefSeq" id="WP_002220760.1">
    <property type="nucleotide sequence ID" value="NZ_CP009715.1"/>
</dbReference>
<dbReference type="SMR" id="A4TSJ0"/>
<dbReference type="GeneID" id="57974600"/>
<dbReference type="KEGG" id="ypp:YPDSF_3911"/>
<dbReference type="PATRIC" id="fig|386656.14.peg.606"/>
<dbReference type="GO" id="GO:0005886">
    <property type="term" value="C:plasma membrane"/>
    <property type="evidence" value="ECO:0007669"/>
    <property type="project" value="UniProtKB-SubCell"/>
</dbReference>
<dbReference type="GO" id="GO:0045259">
    <property type="term" value="C:proton-transporting ATP synthase complex"/>
    <property type="evidence" value="ECO:0007669"/>
    <property type="project" value="UniProtKB-KW"/>
</dbReference>
<dbReference type="GO" id="GO:0046933">
    <property type="term" value="F:proton-transporting ATP synthase activity, rotational mechanism"/>
    <property type="evidence" value="ECO:0007669"/>
    <property type="project" value="UniProtKB-UniRule"/>
</dbReference>
<dbReference type="FunFam" id="1.10.520.20:FF:000001">
    <property type="entry name" value="ATP synthase subunit delta"/>
    <property type="match status" value="1"/>
</dbReference>
<dbReference type="Gene3D" id="1.10.520.20">
    <property type="entry name" value="N-terminal domain of the delta subunit of the F1F0-ATP synthase"/>
    <property type="match status" value="1"/>
</dbReference>
<dbReference type="HAMAP" id="MF_01416">
    <property type="entry name" value="ATP_synth_delta_bact"/>
    <property type="match status" value="1"/>
</dbReference>
<dbReference type="InterPro" id="IPR026015">
    <property type="entry name" value="ATP_synth_OSCP/delta_N_sf"/>
</dbReference>
<dbReference type="InterPro" id="IPR020781">
    <property type="entry name" value="ATPase_OSCP/d_CS"/>
</dbReference>
<dbReference type="InterPro" id="IPR000711">
    <property type="entry name" value="ATPase_OSCP/dsu"/>
</dbReference>
<dbReference type="NCBIfam" id="TIGR01145">
    <property type="entry name" value="ATP_synt_delta"/>
    <property type="match status" value="1"/>
</dbReference>
<dbReference type="NCBIfam" id="NF004402">
    <property type="entry name" value="PRK05758.2-2"/>
    <property type="match status" value="1"/>
</dbReference>
<dbReference type="NCBIfam" id="NF004404">
    <property type="entry name" value="PRK05758.2-5"/>
    <property type="match status" value="1"/>
</dbReference>
<dbReference type="PANTHER" id="PTHR11910">
    <property type="entry name" value="ATP SYNTHASE DELTA CHAIN"/>
    <property type="match status" value="1"/>
</dbReference>
<dbReference type="Pfam" id="PF00213">
    <property type="entry name" value="OSCP"/>
    <property type="match status" value="1"/>
</dbReference>
<dbReference type="PRINTS" id="PR00125">
    <property type="entry name" value="ATPASEDELTA"/>
</dbReference>
<dbReference type="SUPFAM" id="SSF47928">
    <property type="entry name" value="N-terminal domain of the delta subunit of the F1F0-ATP synthase"/>
    <property type="match status" value="1"/>
</dbReference>
<dbReference type="PROSITE" id="PS00389">
    <property type="entry name" value="ATPASE_DELTA"/>
    <property type="match status" value="1"/>
</dbReference>
<comment type="function">
    <text evidence="1">F(1)F(0) ATP synthase produces ATP from ADP in the presence of a proton or sodium gradient. F-type ATPases consist of two structural domains, F(1) containing the extramembraneous catalytic core and F(0) containing the membrane proton channel, linked together by a central stalk and a peripheral stalk. During catalysis, ATP synthesis in the catalytic domain of F(1) is coupled via a rotary mechanism of the central stalk subunits to proton translocation.</text>
</comment>
<comment type="function">
    <text evidence="1">This protein is part of the stalk that links CF(0) to CF(1). It either transmits conformational changes from CF(0) to CF(1) or is implicated in proton conduction.</text>
</comment>
<comment type="subunit">
    <text evidence="1">F-type ATPases have 2 components, F(1) - the catalytic core - and F(0) - the membrane proton channel. F(1) has five subunits: alpha(3), beta(3), gamma(1), delta(1), epsilon(1). F(0) has three main subunits: a(1), b(2) and c(10-14). The alpha and beta chains form an alternating ring which encloses part of the gamma chain. F(1) is attached to F(0) by a central stalk formed by the gamma and epsilon chains, while a peripheral stalk is formed by the delta and b chains.</text>
</comment>
<comment type="subcellular location">
    <subcellularLocation>
        <location evidence="1">Cell inner membrane</location>
        <topology evidence="1">Peripheral membrane protein</topology>
    </subcellularLocation>
</comment>
<comment type="similarity">
    <text evidence="1">Belongs to the ATPase delta chain family.</text>
</comment>
<sequence>MSEFVTVARPYAKAAFDFAVEHQAVERWQNMLAFTAQVTRNEQIAELLSGAVAPETMSTTFIAVCGDQLDEPAQNFIRVMAENGRLLVLPEVLQQFIQLRASLESTVDVEVSSARALNDEQLAKIAAAMEKRLSRKVKLNCKIDKSVMAGVVIRAGDMVIDGSVRGRLERLADVLQS</sequence>
<name>ATPD_YERPP</name>